<comment type="function">
    <text>Disrupting the ure2 operon has no effect on urease activity, or pathogen survival in BALB/c mice when inoculated by gavage, but confers slightly enhanced resistance to low pH killing in vitro.</text>
</comment>
<comment type="catalytic activity">
    <reaction evidence="1">
        <text>urea + 2 H2O + H(+) = hydrogencarbonate + 2 NH4(+)</text>
        <dbReference type="Rhea" id="RHEA:20557"/>
        <dbReference type="ChEBI" id="CHEBI:15377"/>
        <dbReference type="ChEBI" id="CHEBI:15378"/>
        <dbReference type="ChEBI" id="CHEBI:16199"/>
        <dbReference type="ChEBI" id="CHEBI:17544"/>
        <dbReference type="ChEBI" id="CHEBI:28938"/>
        <dbReference type="EC" id="3.5.1.5"/>
    </reaction>
</comment>
<comment type="pathway">
    <text evidence="1">Nitrogen metabolism; urea degradation; CO(2) and NH(3) from urea (urease route): step 1/1.</text>
</comment>
<comment type="subunit">
    <text evidence="1">Heterotrimer of UreA (gamma), UreB (beta) and UreC (alpha) subunits. Three heterotrimers associate to form the active enzyme.</text>
</comment>
<comment type="subcellular location">
    <subcellularLocation>
        <location evidence="1">Cytoplasm</location>
    </subcellularLocation>
</comment>
<comment type="similarity">
    <text evidence="1">Belongs to the urease beta subunit family.</text>
</comment>
<keyword id="KW-0963">Cytoplasm</keyword>
<keyword id="KW-0378">Hydrolase</keyword>
<accession>Q8FZW3</accession>
<accession>G0KB42</accession>
<sequence>MAKEPTKAAHPQPEQTKTNHKAHRPVGGYVLAKDPIEINQGRPRTTLTVRNTGDRPIQIGSHFHFFEVNRYLEFDRSKAFGLRLDIPANTAVRFEPGDEKEVTLVPFAGKRFIFGFNNLVDGWSGDGPTPDYQPNREIAAERAEKLGFKSCKSGGKDAK</sequence>
<organism>
    <name type="scientific">Brucella suis biovar 1 (strain 1330)</name>
    <dbReference type="NCBI Taxonomy" id="204722"/>
    <lineage>
        <taxon>Bacteria</taxon>
        <taxon>Pseudomonadati</taxon>
        <taxon>Pseudomonadota</taxon>
        <taxon>Alphaproteobacteria</taxon>
        <taxon>Hyphomicrobiales</taxon>
        <taxon>Brucellaceae</taxon>
        <taxon>Brucella/Ochrobactrum group</taxon>
        <taxon>Brucella</taxon>
    </lineage>
</organism>
<evidence type="ECO:0000255" key="1">
    <source>
        <dbReference type="HAMAP-Rule" id="MF_01954"/>
    </source>
</evidence>
<evidence type="ECO:0000256" key="2">
    <source>
        <dbReference type="SAM" id="MobiDB-lite"/>
    </source>
</evidence>
<protein>
    <recommendedName>
        <fullName evidence="1">Urease subunit beta 2</fullName>
        <ecNumber evidence="1">3.5.1.5</ecNumber>
    </recommendedName>
    <alternativeName>
        <fullName evidence="1">Urea amidohydrolase subunit beta 2</fullName>
    </alternativeName>
</protein>
<proteinExistence type="inferred from homology"/>
<name>URE22_BRUSU</name>
<feature type="chain" id="PRO_0000234239" description="Urease subunit beta 2">
    <location>
        <begin position="1"/>
        <end position="159"/>
    </location>
</feature>
<feature type="region of interest" description="Disordered" evidence="2">
    <location>
        <begin position="1"/>
        <end position="24"/>
    </location>
</feature>
<reference key="1">
    <citation type="journal article" date="2002" name="Proc. Natl. Acad. Sci. U.S.A.">
        <title>The Brucella suis genome reveals fundamental similarities between animal and plant pathogens and symbionts.</title>
        <authorList>
            <person name="Paulsen I.T."/>
            <person name="Seshadri R."/>
            <person name="Nelson K.E."/>
            <person name="Eisen J.A."/>
            <person name="Heidelberg J.F."/>
            <person name="Read T.D."/>
            <person name="Dodson R.J."/>
            <person name="Umayam L.A."/>
            <person name="Brinkac L.M."/>
            <person name="Beanan M.J."/>
            <person name="Daugherty S.C."/>
            <person name="DeBoy R.T."/>
            <person name="Durkin A.S."/>
            <person name="Kolonay J.F."/>
            <person name="Madupu R."/>
            <person name="Nelson W.C."/>
            <person name="Ayodeji B."/>
            <person name="Kraul M."/>
            <person name="Shetty J."/>
            <person name="Malek J.A."/>
            <person name="Van Aken S.E."/>
            <person name="Riedmuller S."/>
            <person name="Tettelin H."/>
            <person name="Gill S.R."/>
            <person name="White O."/>
            <person name="Salzberg S.L."/>
            <person name="Hoover D.L."/>
            <person name="Lindler L.E."/>
            <person name="Halling S.M."/>
            <person name="Boyle S.M."/>
            <person name="Fraser C.M."/>
        </authorList>
    </citation>
    <scope>NUCLEOTIDE SEQUENCE [LARGE SCALE GENOMIC DNA]</scope>
    <source>
        <strain>1330</strain>
    </source>
</reference>
<reference key="2">
    <citation type="journal article" date="2011" name="J. Bacteriol.">
        <title>Revised genome sequence of Brucella suis 1330.</title>
        <authorList>
            <person name="Tae H."/>
            <person name="Shallom S."/>
            <person name="Settlage R."/>
            <person name="Preston D."/>
            <person name="Adams L.G."/>
            <person name="Garner H.R."/>
        </authorList>
    </citation>
    <scope>NUCLEOTIDE SEQUENCE [LARGE SCALE GENOMIC DNA]</scope>
    <source>
        <strain>1330</strain>
    </source>
</reference>
<reference key="3">
    <citation type="journal article" date="2007" name="BMC Microbiol.">
        <title>Brucella suis urease encoded by ure1 but not ure2 is necessary for intestinal infection of BALB/c mice.</title>
        <authorList>
            <person name="Bandara A.B."/>
            <person name="Contreras A."/>
            <person name="Contreras-Rodriguez A."/>
            <person name="Martins A.M."/>
            <person name="Dobrean V."/>
            <person name="Poff-Reichow S."/>
            <person name="Rajasekaran P."/>
            <person name="Sriranganathan N."/>
            <person name="Schurig G.G."/>
            <person name="Boyle S.M."/>
        </authorList>
    </citation>
    <scope>OPERON DISRUPTION</scope>
    <scope>LACK OF ROLE IN VIRULENCE</scope>
    <source>
        <strain>1330</strain>
    </source>
</reference>
<dbReference type="EC" id="3.5.1.5" evidence="1"/>
<dbReference type="EMBL" id="AE014291">
    <property type="protein sequence ID" value="AAN30271.1"/>
    <property type="molecule type" value="Genomic_DNA"/>
</dbReference>
<dbReference type="EMBL" id="CP002997">
    <property type="protein sequence ID" value="AEM18688.1"/>
    <property type="molecule type" value="Genomic_DNA"/>
</dbReference>
<dbReference type="RefSeq" id="WP_004688520.1">
    <property type="nucleotide sequence ID" value="NZ_KN046804.1"/>
</dbReference>
<dbReference type="SMR" id="Q8FZW3"/>
<dbReference type="KEGG" id="bms:BR1357"/>
<dbReference type="KEGG" id="bsi:BS1330_I1352"/>
<dbReference type="PATRIC" id="fig|204722.21.peg.831"/>
<dbReference type="HOGENOM" id="CLU_129707_2_0_5"/>
<dbReference type="PhylomeDB" id="Q8FZW3"/>
<dbReference type="BRENDA" id="3.5.1.5">
    <property type="organism ID" value="14929"/>
</dbReference>
<dbReference type="UniPathway" id="UPA00258">
    <property type="reaction ID" value="UER00370"/>
</dbReference>
<dbReference type="Proteomes" id="UP000007104">
    <property type="component" value="Chromosome I"/>
</dbReference>
<dbReference type="GO" id="GO:0035550">
    <property type="term" value="C:urease complex"/>
    <property type="evidence" value="ECO:0007669"/>
    <property type="project" value="InterPro"/>
</dbReference>
<dbReference type="GO" id="GO:0009039">
    <property type="term" value="F:urease activity"/>
    <property type="evidence" value="ECO:0007669"/>
    <property type="project" value="UniProtKB-UniRule"/>
</dbReference>
<dbReference type="GO" id="GO:0043419">
    <property type="term" value="P:urea catabolic process"/>
    <property type="evidence" value="ECO:0007669"/>
    <property type="project" value="UniProtKB-UniRule"/>
</dbReference>
<dbReference type="CDD" id="cd00407">
    <property type="entry name" value="Urease_beta"/>
    <property type="match status" value="1"/>
</dbReference>
<dbReference type="FunFam" id="2.10.150.10:FF:000001">
    <property type="entry name" value="Urease subunit beta"/>
    <property type="match status" value="1"/>
</dbReference>
<dbReference type="Gene3D" id="2.10.150.10">
    <property type="entry name" value="Urease, beta subunit"/>
    <property type="match status" value="1"/>
</dbReference>
<dbReference type="HAMAP" id="MF_01954">
    <property type="entry name" value="Urease_beta"/>
    <property type="match status" value="1"/>
</dbReference>
<dbReference type="InterPro" id="IPR002019">
    <property type="entry name" value="Urease_beta-like"/>
</dbReference>
<dbReference type="InterPro" id="IPR036461">
    <property type="entry name" value="Urease_betasu_sf"/>
</dbReference>
<dbReference type="InterPro" id="IPR050069">
    <property type="entry name" value="Urease_subunit"/>
</dbReference>
<dbReference type="NCBIfam" id="NF009682">
    <property type="entry name" value="PRK13203.1"/>
    <property type="match status" value="1"/>
</dbReference>
<dbReference type="NCBIfam" id="TIGR00192">
    <property type="entry name" value="urease_beta"/>
    <property type="match status" value="1"/>
</dbReference>
<dbReference type="PANTHER" id="PTHR33569">
    <property type="entry name" value="UREASE"/>
    <property type="match status" value="1"/>
</dbReference>
<dbReference type="PANTHER" id="PTHR33569:SF1">
    <property type="entry name" value="UREASE"/>
    <property type="match status" value="1"/>
</dbReference>
<dbReference type="Pfam" id="PF00699">
    <property type="entry name" value="Urease_beta"/>
    <property type="match status" value="1"/>
</dbReference>
<dbReference type="SUPFAM" id="SSF51278">
    <property type="entry name" value="Urease, beta-subunit"/>
    <property type="match status" value="1"/>
</dbReference>
<gene>
    <name evidence="1" type="primary">ureB2</name>
    <name type="ordered locus">BR1357</name>
    <name type="ordered locus">BS1330_I1352</name>
</gene>